<comment type="function">
    <text evidence="1">Translation initiation factor that is able to deliver tRNA to the P-site of the eukaryotic ribosome in a GTP-independent manner. The binding of Met-tRNA(I) occurs after the AUG codon finds its position in the P-site of 40S ribosomes, the situation that takes place during initiation complex formation on some specific RNAs. Its activity in tRNA binding with 40S subunits does not require the presence of the aminoacyl moiety. Possesses the unique ability to deliver non-Met (elongator) tRNAs into the P-site of the 40S subunit. In addition to its role in initiation, can promote release of deacylated tRNA and mRNA from recycled 40S subunits following ABCE1-mediated dissociation of post-termination ribosomal complexes into subunits (By similarity).</text>
</comment>
<comment type="subcellular location">
    <subcellularLocation>
        <location evidence="1">Cytoplasm</location>
    </subcellularLocation>
</comment>
<comment type="similarity">
    <text evidence="8">Belongs to the eIF2D family.</text>
</comment>
<keyword id="KW-0007">Acetylation</keyword>
<keyword id="KW-0963">Cytoplasm</keyword>
<keyword id="KW-0396">Initiation factor</keyword>
<keyword id="KW-0597">Phosphoprotein</keyword>
<keyword id="KW-0648">Protein biosynthesis</keyword>
<keyword id="KW-1185">Reference proteome</keyword>
<evidence type="ECO:0000250" key="1"/>
<evidence type="ECO:0000250" key="2">
    <source>
        <dbReference type="UniProtKB" id="P41214"/>
    </source>
</evidence>
<evidence type="ECO:0000250" key="3">
    <source>
        <dbReference type="UniProtKB" id="Q61211"/>
    </source>
</evidence>
<evidence type="ECO:0000255" key="4">
    <source>
        <dbReference type="PROSITE-ProRule" id="PRU00161"/>
    </source>
</evidence>
<evidence type="ECO:0000255" key="5">
    <source>
        <dbReference type="PROSITE-ProRule" id="PRU00200"/>
    </source>
</evidence>
<evidence type="ECO:0000255" key="6">
    <source>
        <dbReference type="PROSITE-ProRule" id="PRU01273"/>
    </source>
</evidence>
<evidence type="ECO:0000256" key="7">
    <source>
        <dbReference type="SAM" id="MobiDB-lite"/>
    </source>
</evidence>
<evidence type="ECO:0000305" key="8"/>
<proteinExistence type="evidence at transcript level"/>
<name>EIF2D_PONAB</name>
<accession>Q5RA63</accession>
<feature type="chain" id="PRO_0000130613" description="Eukaryotic translation initiation factor 2D">
    <location>
        <begin position="1"/>
        <end position="584"/>
    </location>
</feature>
<feature type="domain" description="PUA" evidence="4">
    <location>
        <begin position="93"/>
        <end position="173"/>
    </location>
</feature>
<feature type="domain" description="SWIB/MDM2" evidence="6">
    <location>
        <begin position="383"/>
        <end position="467"/>
    </location>
</feature>
<feature type="domain" description="SUI1" evidence="5">
    <location>
        <begin position="491"/>
        <end position="564"/>
    </location>
</feature>
<feature type="region of interest" description="Disordered" evidence="7">
    <location>
        <begin position="223"/>
        <end position="257"/>
    </location>
</feature>
<feature type="compositionally biased region" description="Basic and acidic residues" evidence="7">
    <location>
        <begin position="227"/>
        <end position="238"/>
    </location>
</feature>
<feature type="compositionally biased region" description="Polar residues" evidence="7">
    <location>
        <begin position="247"/>
        <end position="257"/>
    </location>
</feature>
<feature type="modified residue" description="N-acetylmethionine" evidence="2">
    <location>
        <position position="1"/>
    </location>
</feature>
<feature type="modified residue" description="Phosphoserine" evidence="2">
    <location>
        <position position="237"/>
    </location>
</feature>
<feature type="modified residue" description="Phosphoserine" evidence="3">
    <location>
        <position position="254"/>
    </location>
</feature>
<feature type="modified residue" description="Phosphoserine" evidence="2">
    <location>
        <position position="361"/>
    </location>
</feature>
<reference key="1">
    <citation type="submission" date="2004-11" db="EMBL/GenBank/DDBJ databases">
        <authorList>
            <consortium name="The German cDNA consortium"/>
        </authorList>
    </citation>
    <scope>NUCLEOTIDE SEQUENCE [LARGE SCALE MRNA]</scope>
    <source>
        <tissue>Heart</tissue>
    </source>
</reference>
<sequence>MFAKAFRVKSNTAIKGSDRRKLRADVTTAFPTLGTDQVSELVPGKEELNIVKLYAHKGDAVTVYVSGGNPILFELEKNLYPTVYTLWSYPDLLPTFTTWPLVLEKLVGGADLMLPGLVMPPAGLPQVQKGDLCAISLVGNRAPVAIGVAAMSTAEMLTSGLKGRGFSVLHTYQDHLWRSGNKSSPPSIAPLALDSADLSEEKGSVQMDSTLQGDMRHMTLEGEEENGEVHQAREDKSLSEAPEDTSTRGLNQDSTDSKTLQEQMDELLQQCFLHALKCRVKKADLPLLASTFLGSHMFSCCPEGRQLDIKKSSYKKLSKFLQQMQQEQIIQVKELSKGVESIVAVDWKHPRITSFVIPEPSPTSQTIQEGSREQPYHPPDIKPLYCVPASMTLLFQESGHKKGSFLEGSEVRTIVINYAKKNDLVDADNKNLVRLDPILCDCILEKNEQHTVMKLPWDSLLTRCLEKLQPAYQVTLPGQEPIVKKGRICPIDITLAQRASNKKVTVVRNLEAYGLDPYSVAAILQQRCQASTTVNPAPGAKDSLQVQIQGNQVHHLGWLLLEEYQLPRKHIQGLEKALKPGKKK</sequence>
<protein>
    <recommendedName>
        <fullName>Eukaryotic translation initiation factor 2D</fullName>
        <shortName>eIF2d</shortName>
    </recommendedName>
    <alternativeName>
        <fullName>Ligatin</fullName>
    </alternativeName>
</protein>
<dbReference type="EMBL" id="CR859158">
    <property type="protein sequence ID" value="CAH91347.1"/>
    <property type="molecule type" value="mRNA"/>
</dbReference>
<dbReference type="RefSeq" id="NP_001125796.1">
    <property type="nucleotide sequence ID" value="NM_001132324.1"/>
</dbReference>
<dbReference type="SMR" id="Q5RA63"/>
<dbReference type="FunCoup" id="Q5RA63">
    <property type="interactions" value="3080"/>
</dbReference>
<dbReference type="STRING" id="9601.ENSPPYP00000000303"/>
<dbReference type="GeneID" id="100172724"/>
<dbReference type="KEGG" id="pon:100172724"/>
<dbReference type="CTD" id="1939"/>
<dbReference type="eggNOG" id="KOG2522">
    <property type="taxonomic scope" value="Eukaryota"/>
</dbReference>
<dbReference type="InParanoid" id="Q5RA63"/>
<dbReference type="OrthoDB" id="199771at2759"/>
<dbReference type="Proteomes" id="UP000001595">
    <property type="component" value="Unplaced"/>
</dbReference>
<dbReference type="GO" id="GO:0005737">
    <property type="term" value="C:cytoplasm"/>
    <property type="evidence" value="ECO:0000250"/>
    <property type="project" value="UniProtKB"/>
</dbReference>
<dbReference type="GO" id="GO:0003723">
    <property type="term" value="F:RNA binding"/>
    <property type="evidence" value="ECO:0007669"/>
    <property type="project" value="InterPro"/>
</dbReference>
<dbReference type="GO" id="GO:0003743">
    <property type="term" value="F:translation initiation factor activity"/>
    <property type="evidence" value="ECO:0000250"/>
    <property type="project" value="UniProtKB"/>
</dbReference>
<dbReference type="GO" id="GO:0001731">
    <property type="term" value="P:formation of translation preinitiation complex"/>
    <property type="evidence" value="ECO:0007669"/>
    <property type="project" value="InterPro"/>
</dbReference>
<dbReference type="CDD" id="cd11608">
    <property type="entry name" value="eIF2D_C"/>
    <property type="match status" value="1"/>
</dbReference>
<dbReference type="CDD" id="cd11610">
    <property type="entry name" value="eIF2D_N"/>
    <property type="match status" value="1"/>
</dbReference>
<dbReference type="CDD" id="cd21156">
    <property type="entry name" value="PUA_eIF2d-like"/>
    <property type="match status" value="1"/>
</dbReference>
<dbReference type="FunFam" id="3.10.400.20:FF:000002">
    <property type="entry name" value="Eukaryotic translation initiation factor 2D"/>
    <property type="match status" value="1"/>
</dbReference>
<dbReference type="FunFam" id="3.30.780.10:FF:000007">
    <property type="entry name" value="Putative eukaryotic translation initiation factor 2d"/>
    <property type="match status" value="1"/>
</dbReference>
<dbReference type="Gene3D" id="3.10.400.20">
    <property type="match status" value="1"/>
</dbReference>
<dbReference type="Gene3D" id="3.30.780.10">
    <property type="entry name" value="SUI1-like domain"/>
    <property type="match status" value="1"/>
</dbReference>
<dbReference type="InterPro" id="IPR039757">
    <property type="entry name" value="EIF2D"/>
</dbReference>
<dbReference type="InterPro" id="IPR048247">
    <property type="entry name" value="eIF2D_N"/>
</dbReference>
<dbReference type="InterPro" id="IPR039759">
    <property type="entry name" value="eIF2D_SUI1"/>
</dbReference>
<dbReference type="InterPro" id="IPR041366">
    <property type="entry name" value="Pre-PUA"/>
</dbReference>
<dbReference type="InterPro" id="IPR002478">
    <property type="entry name" value="PUA"/>
</dbReference>
<dbReference type="InterPro" id="IPR015947">
    <property type="entry name" value="PUA-like_sf"/>
</dbReference>
<dbReference type="InterPro" id="IPR048248">
    <property type="entry name" value="PUA_eIF2d-like"/>
</dbReference>
<dbReference type="InterPro" id="IPR001950">
    <property type="entry name" value="SUI1"/>
</dbReference>
<dbReference type="InterPro" id="IPR036877">
    <property type="entry name" value="SUI1_dom_sf"/>
</dbReference>
<dbReference type="InterPro" id="IPR036885">
    <property type="entry name" value="SWIB_MDM2_dom_sf"/>
</dbReference>
<dbReference type="InterPro" id="IPR003121">
    <property type="entry name" value="SWIB_MDM2_domain"/>
</dbReference>
<dbReference type="PANTHER" id="PTHR12217">
    <property type="entry name" value="EUKARYOTIC TRANSLATION INITIATION FACTOR 2D"/>
    <property type="match status" value="1"/>
</dbReference>
<dbReference type="PANTHER" id="PTHR12217:SF4">
    <property type="entry name" value="EUKARYOTIC TRANSLATION INITIATION FACTOR 2D"/>
    <property type="match status" value="1"/>
</dbReference>
<dbReference type="Pfam" id="PF17832">
    <property type="entry name" value="Pre-PUA"/>
    <property type="match status" value="1"/>
</dbReference>
<dbReference type="Pfam" id="PF01253">
    <property type="entry name" value="SUI1"/>
    <property type="match status" value="1"/>
</dbReference>
<dbReference type="Pfam" id="PF25304">
    <property type="entry name" value="WH_eIF2D"/>
    <property type="match status" value="1"/>
</dbReference>
<dbReference type="SMART" id="SM00359">
    <property type="entry name" value="PUA"/>
    <property type="match status" value="1"/>
</dbReference>
<dbReference type="SUPFAM" id="SSF55159">
    <property type="entry name" value="eIF1-like"/>
    <property type="match status" value="1"/>
</dbReference>
<dbReference type="SUPFAM" id="SSF88697">
    <property type="entry name" value="PUA domain-like"/>
    <property type="match status" value="1"/>
</dbReference>
<dbReference type="SUPFAM" id="SSF47592">
    <property type="entry name" value="SWIB/MDM2 domain"/>
    <property type="match status" value="1"/>
</dbReference>
<dbReference type="PROSITE" id="PS50890">
    <property type="entry name" value="PUA"/>
    <property type="match status" value="1"/>
</dbReference>
<dbReference type="PROSITE" id="PS50296">
    <property type="entry name" value="SUI1"/>
    <property type="match status" value="1"/>
</dbReference>
<dbReference type="PROSITE" id="PS51925">
    <property type="entry name" value="SWIB_MDM2"/>
    <property type="match status" value="1"/>
</dbReference>
<gene>
    <name type="primary">EIF2D</name>
    <name type="synonym">LGTN</name>
</gene>
<organism>
    <name type="scientific">Pongo abelii</name>
    <name type="common">Sumatran orangutan</name>
    <name type="synonym">Pongo pygmaeus abelii</name>
    <dbReference type="NCBI Taxonomy" id="9601"/>
    <lineage>
        <taxon>Eukaryota</taxon>
        <taxon>Metazoa</taxon>
        <taxon>Chordata</taxon>
        <taxon>Craniata</taxon>
        <taxon>Vertebrata</taxon>
        <taxon>Euteleostomi</taxon>
        <taxon>Mammalia</taxon>
        <taxon>Eutheria</taxon>
        <taxon>Euarchontoglires</taxon>
        <taxon>Primates</taxon>
        <taxon>Haplorrhini</taxon>
        <taxon>Catarrhini</taxon>
        <taxon>Hominidae</taxon>
        <taxon>Pongo</taxon>
    </lineage>
</organism>